<proteinExistence type="evidence at protein level"/>
<accession>Q9UBY9</accession>
<accession>B3KQ37</accession>
<accession>C9K0Y0</accession>
<accession>Q9NU17</accession>
<evidence type="ECO:0000255" key="1">
    <source>
        <dbReference type="PROSITE-ProRule" id="PRU00285"/>
    </source>
</evidence>
<evidence type="ECO:0000256" key="2">
    <source>
        <dbReference type="SAM" id="MobiDB-lite"/>
    </source>
</evidence>
<evidence type="ECO:0000269" key="3">
    <source>
    </source>
</evidence>
<evidence type="ECO:0000303" key="4">
    <source>
    </source>
</evidence>
<evidence type="ECO:0000303" key="5">
    <source>
    </source>
</evidence>
<evidence type="ECO:0000305" key="6"/>
<organism>
    <name type="scientific">Homo sapiens</name>
    <name type="common">Human</name>
    <dbReference type="NCBI Taxonomy" id="9606"/>
    <lineage>
        <taxon>Eukaryota</taxon>
        <taxon>Metazoa</taxon>
        <taxon>Chordata</taxon>
        <taxon>Craniata</taxon>
        <taxon>Vertebrata</taxon>
        <taxon>Euteleostomi</taxon>
        <taxon>Mammalia</taxon>
        <taxon>Eutheria</taxon>
        <taxon>Euarchontoglires</taxon>
        <taxon>Primates</taxon>
        <taxon>Haplorrhini</taxon>
        <taxon>Catarrhini</taxon>
        <taxon>Hominidae</taxon>
        <taxon>Homo</taxon>
    </lineage>
</organism>
<name>HSPB7_HUMAN</name>
<keyword id="KW-0002">3D-structure</keyword>
<keyword id="KW-0025">Alternative splicing</keyword>
<keyword id="KW-0143">Chaperone</keyword>
<keyword id="KW-0963">Cytoplasm</keyword>
<keyword id="KW-0539">Nucleus</keyword>
<keyword id="KW-1267">Proteomics identification</keyword>
<keyword id="KW-1185">Reference proteome</keyword>
<keyword id="KW-0346">Stress response</keyword>
<comment type="subunit">
    <text>Interacts with C-terminal domain of actin-binding protein 280.</text>
</comment>
<comment type="interaction">
    <interactant intactId="EBI-739361">
        <id>Q9UBY9</id>
    </interactant>
    <interactant intactId="EBI-747185">
        <id>O95817</id>
        <label>BAG3</label>
    </interactant>
    <organismsDiffer>false</organismsDiffer>
    <experiments>3</experiments>
</comment>
<comment type="interaction">
    <interactant intactId="EBI-739361">
        <id>Q9UBY9</id>
    </interactant>
    <interactant intactId="EBI-12030460">
        <id>Q8WYQ4-2</id>
        <label>C22orf15</label>
    </interactant>
    <organismsDiffer>false</organismsDiffer>
    <experiments>6</experiments>
</comment>
<comment type="interaction">
    <interactant intactId="EBI-739361">
        <id>Q9UBY9</id>
    </interactant>
    <interactant intactId="EBI-742887">
        <id>Q8TAP6</id>
        <label>CEP76</label>
    </interactant>
    <organismsDiffer>false</organismsDiffer>
    <experiments>6</experiments>
</comment>
<comment type="interaction">
    <interactant intactId="EBI-739361">
        <id>Q9UBY9</id>
    </interactant>
    <interactant intactId="EBI-742054">
        <id>Q96D03</id>
        <label>DDIT4L</label>
    </interactant>
    <organismsDiffer>false</organismsDiffer>
    <experiments>5</experiments>
</comment>
<comment type="interaction">
    <interactant intactId="EBI-739361">
        <id>Q9UBY9</id>
    </interactant>
    <interactant intactId="EBI-1176455">
        <id>P63172</id>
        <label>DYNLT1</label>
    </interactant>
    <organismsDiffer>false</organismsDiffer>
    <experiments>3</experiments>
</comment>
<comment type="interaction">
    <interactant intactId="EBI-739361">
        <id>Q9UBY9</id>
    </interactant>
    <interactant intactId="EBI-9641086">
        <id>P21333-2</id>
        <label>FLNA</label>
    </interactant>
    <organismsDiffer>false</organismsDiffer>
    <experiments>10</experiments>
</comment>
<comment type="interaction">
    <interactant intactId="EBI-739361">
        <id>Q9UBY9</id>
    </interactant>
    <interactant intactId="EBI-11978177">
        <id>Q96NT3-2</id>
        <label>GUCD1</label>
    </interactant>
    <organismsDiffer>false</organismsDiffer>
    <experiments>3</experiments>
</comment>
<comment type="interaction">
    <interactant intactId="EBI-739361">
        <id>Q9UBY9</id>
    </interactant>
    <interactant intactId="EBI-739074">
        <id>Q9UJY1</id>
        <label>HSPB8</label>
    </interactant>
    <organismsDiffer>false</organismsDiffer>
    <experiments>11</experiments>
</comment>
<comment type="interaction">
    <interactant intactId="EBI-739361">
        <id>Q9UBY9</id>
    </interactant>
    <interactant intactId="EBI-747204">
        <id>Q9UKT9</id>
        <label>IKZF3</label>
    </interactant>
    <organismsDiffer>false</organismsDiffer>
    <experiments>3</experiments>
</comment>
<comment type="interaction">
    <interactant intactId="EBI-739361">
        <id>Q9UBY9</id>
    </interactant>
    <interactant intactId="EBI-350517">
        <id>Q9NR12</id>
        <label>PDLIM7</label>
    </interactant>
    <organismsDiffer>false</organismsDiffer>
    <experiments>3</experiments>
</comment>
<comment type="interaction">
    <interactant intactId="EBI-739361">
        <id>Q9UBY9</id>
    </interactant>
    <interactant intactId="EBI-11532361">
        <id>P78356-2</id>
        <label>PIP4K2B</label>
    </interactant>
    <organismsDiffer>false</organismsDiffer>
    <experiments>3</experiments>
</comment>
<comment type="interaction">
    <interactant intactId="EBI-739361">
        <id>Q9UBY9</id>
    </interactant>
    <interactant intactId="EBI-742388">
        <id>Q9H8W4</id>
        <label>PLEKHF2</label>
    </interactant>
    <organismsDiffer>false</organismsDiffer>
    <experiments>6</experiments>
</comment>
<comment type="interaction">
    <interactant intactId="EBI-739361">
        <id>Q9UBY9</id>
    </interactant>
    <interactant intactId="EBI-3957793">
        <id>Q9GZV8</id>
        <label>PRDM14</label>
    </interactant>
    <organismsDiffer>false</organismsDiffer>
    <experiments>3</experiments>
</comment>
<comment type="interaction">
    <interactant intactId="EBI-739361">
        <id>Q9UBY9</id>
    </interactant>
    <interactant intactId="EBI-307352">
        <id>Q04864</id>
        <label>REL</label>
    </interactant>
    <organismsDiffer>false</organismsDiffer>
    <experiments>3</experiments>
</comment>
<comment type="interaction">
    <interactant intactId="EBI-739361">
        <id>Q9UBY9</id>
    </interactant>
    <interactant intactId="EBI-10829018">
        <id>Q04864-2</id>
        <label>REL</label>
    </interactant>
    <organismsDiffer>false</organismsDiffer>
    <experiments>3</experiments>
</comment>
<comment type="interaction">
    <interactant intactId="EBI-739361">
        <id>Q9UBY9</id>
    </interactant>
    <interactant intactId="EBI-348469">
        <id>Q15427</id>
        <label>SF3B4</label>
    </interactant>
    <organismsDiffer>false</organismsDiffer>
    <experiments>3</experiments>
</comment>
<comment type="interaction">
    <interactant intactId="EBI-739361">
        <id>Q9UBY9</id>
    </interactant>
    <interactant intactId="EBI-6872807">
        <id>Q8N0S2</id>
        <label>SYCE1</label>
    </interactant>
    <organismsDiffer>false</organismsDiffer>
    <experiments>3</experiments>
</comment>
<comment type="interaction">
    <interactant intactId="EBI-739361">
        <id>Q9UBY9</id>
    </interactant>
    <interactant intactId="EBI-533224">
        <id>P15884</id>
        <label>TCF4</label>
    </interactant>
    <organismsDiffer>false</organismsDiffer>
    <experiments>3</experiments>
</comment>
<comment type="interaction">
    <interactant intactId="EBI-739361">
        <id>Q9UBY9</id>
    </interactant>
    <interactant intactId="EBI-13636688">
        <id>P15884-3</id>
        <label>TCF4</label>
    </interactant>
    <organismsDiffer>false</organismsDiffer>
    <experiments>3</experiments>
</comment>
<comment type="interaction">
    <interactant intactId="EBI-739361">
        <id>Q9UBY9</id>
    </interactant>
    <interactant intactId="EBI-11139477">
        <id>Q96N21</id>
        <label>TEPSIN</label>
    </interactant>
    <organismsDiffer>false</organismsDiffer>
    <experiments>3</experiments>
</comment>
<comment type="interaction">
    <interactant intactId="EBI-739361">
        <id>Q9UBY9</id>
    </interactant>
    <interactant intactId="EBI-740098">
        <id>P36406</id>
        <label>TRIM23</label>
    </interactant>
    <organismsDiffer>false</organismsDiffer>
    <experiments>3</experiments>
</comment>
<comment type="interaction">
    <interactant intactId="EBI-739361">
        <id>Q9UBY9</id>
    </interactant>
    <interactant intactId="EBI-11530712">
        <id>Q04323-2</id>
        <label>UBXN1</label>
    </interactant>
    <organismsDiffer>false</organismsDiffer>
    <experiments>3</experiments>
</comment>
<comment type="subcellular location">
    <subcellularLocation>
        <location evidence="3">Cytoplasm</location>
    </subcellularLocation>
    <subcellularLocation>
        <location evidence="3">Nucleus</location>
    </subcellularLocation>
    <subcellularLocation>
        <location evidence="3">Nucleus</location>
        <location evidence="3">Cajal body</location>
    </subcellularLocation>
    <text>Resides in sub-nuclear structures known as SC35 speckles or nuclear splicing speckles.</text>
</comment>
<comment type="alternative products">
    <event type="alternative splicing"/>
    <isoform>
        <id>Q9UBY9-1</id>
        <name>1</name>
        <sequence type="displayed"/>
    </isoform>
    <isoform>
        <id>Q9UBY9-2</id>
        <name>2</name>
        <sequence type="described" ref="VSP_002424"/>
    </isoform>
    <isoform>
        <id>Q9UBY9-3</id>
        <name>3</name>
        <sequence type="described" ref="VSP_002425 VSP_002426"/>
    </isoform>
</comment>
<comment type="tissue specificity">
    <text>Isoform 1 is highly expressed in adult and fetal heart, skeletal muscle, and at a much lower levels in adipose tissue and in aorta. Undetectable in other tissues. Isoform 2 and isoform 3 are poorly detected in heart.</text>
</comment>
<comment type="miscellaneous">
    <molecule>Isoform 3</molecule>
    <text evidence="6">May be produced at very low levels due to a premature stop codon in the mRNA, leading to nonsense-mediated mRNA decay.</text>
</comment>
<comment type="similarity">
    <text evidence="1">Belongs to the small heat shock protein (HSP20) family.</text>
</comment>
<gene>
    <name type="primary">HSPB7</name>
    <name type="synonym">CVHSP</name>
</gene>
<dbReference type="EMBL" id="AJ243191">
    <property type="protein sequence ID" value="CAB63258.1"/>
    <property type="molecule type" value="mRNA"/>
</dbReference>
<dbReference type="EMBL" id="AF155908">
    <property type="protein sequence ID" value="AAF20022.1"/>
    <property type="molecule type" value="mRNA"/>
</dbReference>
<dbReference type="EMBL" id="AK057295">
    <property type="protein sequence ID" value="BAG51899.1"/>
    <property type="molecule type" value="mRNA"/>
</dbReference>
<dbReference type="EMBL" id="CR749298">
    <property type="protein sequence ID" value="CAH18153.1"/>
    <property type="molecule type" value="mRNA"/>
</dbReference>
<dbReference type="EMBL" id="AL096775">
    <property type="protein sequence ID" value="CAB86671.1"/>
    <property type="molecule type" value="Genomic_DNA"/>
</dbReference>
<dbReference type="EMBL" id="AL355994">
    <property type="status" value="NOT_ANNOTATED_CDS"/>
    <property type="molecule type" value="Genomic_DNA"/>
</dbReference>
<dbReference type="EMBL" id="BC006319">
    <property type="protein sequence ID" value="AAH06319.1"/>
    <property type="molecule type" value="mRNA"/>
</dbReference>
<dbReference type="CCDS" id="CCDS30611.1">
    <molecule id="Q9UBY9-1"/>
</dbReference>
<dbReference type="CCDS" id="CCDS85932.1">
    <molecule id="Q9UBY9-2"/>
</dbReference>
<dbReference type="RefSeq" id="NP_001336618.1">
    <molecule id="Q9UBY9-2"/>
    <property type="nucleotide sequence ID" value="NM_001349689.2"/>
</dbReference>
<dbReference type="RefSeq" id="NP_055239.1">
    <molecule id="Q9UBY9-1"/>
    <property type="nucleotide sequence ID" value="NM_014424.5"/>
</dbReference>
<dbReference type="PDB" id="8PA0">
    <property type="method" value="X-ray"/>
    <property type="resolution" value="2.85 A"/>
    <property type="chains" value="B=73-157"/>
</dbReference>
<dbReference type="PDB" id="8RHA">
    <property type="method" value="X-ray"/>
    <property type="resolution" value="2.18 A"/>
    <property type="chains" value="A/B/C=73-157"/>
</dbReference>
<dbReference type="PDBsum" id="8PA0"/>
<dbReference type="PDBsum" id="8RHA"/>
<dbReference type="SMR" id="Q9UBY9"/>
<dbReference type="BioGRID" id="118020">
    <property type="interactions" value="23"/>
</dbReference>
<dbReference type="FunCoup" id="Q9UBY9">
    <property type="interactions" value="533"/>
</dbReference>
<dbReference type="IntAct" id="Q9UBY9">
    <property type="interactions" value="24"/>
</dbReference>
<dbReference type="STRING" id="9606.ENSP00000364870"/>
<dbReference type="iPTMnet" id="Q9UBY9"/>
<dbReference type="PhosphoSitePlus" id="Q9UBY9"/>
<dbReference type="BioMuta" id="HSPB7"/>
<dbReference type="jPOST" id="Q9UBY9"/>
<dbReference type="MassIVE" id="Q9UBY9"/>
<dbReference type="PaxDb" id="9606-ENSP00000310111"/>
<dbReference type="PeptideAtlas" id="Q9UBY9"/>
<dbReference type="ProteomicsDB" id="84101">
    <molecule id="Q9UBY9-1"/>
</dbReference>
<dbReference type="ProteomicsDB" id="84102">
    <molecule id="Q9UBY9-2"/>
</dbReference>
<dbReference type="ProteomicsDB" id="84103">
    <molecule id="Q9UBY9-3"/>
</dbReference>
<dbReference type="Antibodypedia" id="29049">
    <property type="antibodies" value="264 antibodies from 30 providers"/>
</dbReference>
<dbReference type="DNASU" id="27129"/>
<dbReference type="Ensembl" id="ENST00000311890.14">
    <molecule id="Q9UBY9-1"/>
    <property type="protein sequence ID" value="ENSP00000310111.9"/>
    <property type="gene ID" value="ENSG00000173641.18"/>
</dbReference>
<dbReference type="Ensembl" id="ENST00000487046.1">
    <molecule id="Q9UBY9-2"/>
    <property type="protein sequence ID" value="ENSP00000419477.1"/>
    <property type="gene ID" value="ENSG00000173641.18"/>
</dbReference>
<dbReference type="GeneID" id="27129"/>
<dbReference type="KEGG" id="hsa:27129"/>
<dbReference type="MANE-Select" id="ENST00000311890.14">
    <property type="protein sequence ID" value="ENSP00000310111.9"/>
    <property type="RefSeq nucleotide sequence ID" value="NM_014424.5"/>
    <property type="RefSeq protein sequence ID" value="NP_055239.1"/>
</dbReference>
<dbReference type="UCSC" id="uc001axo.2">
    <molecule id="Q9UBY9-1"/>
    <property type="organism name" value="human"/>
</dbReference>
<dbReference type="AGR" id="HGNC:5249"/>
<dbReference type="CTD" id="27129"/>
<dbReference type="DisGeNET" id="27129"/>
<dbReference type="GeneCards" id="HSPB7"/>
<dbReference type="HGNC" id="HGNC:5249">
    <property type="gene designation" value="HSPB7"/>
</dbReference>
<dbReference type="HPA" id="ENSG00000173641">
    <property type="expression patterns" value="Group enriched (heart muscle, skeletal muscle, tongue)"/>
</dbReference>
<dbReference type="MIM" id="610692">
    <property type="type" value="gene"/>
</dbReference>
<dbReference type="neXtProt" id="NX_Q9UBY9"/>
<dbReference type="OpenTargets" id="ENSG00000173641"/>
<dbReference type="PharmGKB" id="PA29514"/>
<dbReference type="VEuPathDB" id="HostDB:ENSG00000173641"/>
<dbReference type="eggNOG" id="KOG3591">
    <property type="taxonomic scope" value="Eukaryota"/>
</dbReference>
<dbReference type="GeneTree" id="ENSGT00390000010674"/>
<dbReference type="HOGENOM" id="CLU_124226_0_0_1"/>
<dbReference type="InParanoid" id="Q9UBY9"/>
<dbReference type="OMA" id="CNPYMEK"/>
<dbReference type="OrthoDB" id="9925191at2759"/>
<dbReference type="PAN-GO" id="Q9UBY9">
    <property type="GO annotations" value="2 GO annotations based on evolutionary models"/>
</dbReference>
<dbReference type="PhylomeDB" id="Q9UBY9"/>
<dbReference type="TreeFam" id="TF350564"/>
<dbReference type="PathwayCommons" id="Q9UBY9"/>
<dbReference type="SignaLink" id="Q9UBY9"/>
<dbReference type="BioGRID-ORCS" id="27129">
    <property type="hits" value="16 hits in 1141 CRISPR screens"/>
</dbReference>
<dbReference type="CD-CODE" id="6F24707C">
    <property type="entry name" value="Cajal body"/>
</dbReference>
<dbReference type="ChiTaRS" id="HSPB7">
    <property type="organism name" value="human"/>
</dbReference>
<dbReference type="GenomeRNAi" id="27129"/>
<dbReference type="Pharos" id="Q9UBY9">
    <property type="development level" value="Tbio"/>
</dbReference>
<dbReference type="PRO" id="PR:Q9UBY9"/>
<dbReference type="Proteomes" id="UP000005640">
    <property type="component" value="Chromosome 1"/>
</dbReference>
<dbReference type="RNAct" id="Q9UBY9">
    <property type="molecule type" value="protein"/>
</dbReference>
<dbReference type="Bgee" id="ENSG00000173641">
    <property type="expression patterns" value="Expressed in left ventricle myocardium and 135 other cell types or tissues"/>
</dbReference>
<dbReference type="ExpressionAtlas" id="Q9UBY9">
    <property type="expression patterns" value="baseline and differential"/>
</dbReference>
<dbReference type="GO" id="GO:0015629">
    <property type="term" value="C:actin cytoskeleton"/>
    <property type="evidence" value="ECO:0007669"/>
    <property type="project" value="Ensembl"/>
</dbReference>
<dbReference type="GO" id="GO:0016235">
    <property type="term" value="C:aggresome"/>
    <property type="evidence" value="ECO:0000314"/>
    <property type="project" value="HPA"/>
</dbReference>
<dbReference type="GO" id="GO:0015030">
    <property type="term" value="C:Cajal body"/>
    <property type="evidence" value="ECO:0007669"/>
    <property type="project" value="UniProtKB-SubCell"/>
</dbReference>
<dbReference type="GO" id="GO:0005737">
    <property type="term" value="C:cytoplasm"/>
    <property type="evidence" value="ECO:0000314"/>
    <property type="project" value="UniProtKB"/>
</dbReference>
<dbReference type="GO" id="GO:0005654">
    <property type="term" value="C:nucleoplasm"/>
    <property type="evidence" value="ECO:0000314"/>
    <property type="project" value="HPA"/>
</dbReference>
<dbReference type="GO" id="GO:0005634">
    <property type="term" value="C:nucleus"/>
    <property type="evidence" value="ECO:0000314"/>
    <property type="project" value="UniProtKB"/>
</dbReference>
<dbReference type="GO" id="GO:0031005">
    <property type="term" value="F:filamin binding"/>
    <property type="evidence" value="ECO:0007669"/>
    <property type="project" value="Ensembl"/>
</dbReference>
<dbReference type="GO" id="GO:0007507">
    <property type="term" value="P:heart development"/>
    <property type="evidence" value="ECO:0007669"/>
    <property type="project" value="InterPro"/>
</dbReference>
<dbReference type="GO" id="GO:0008016">
    <property type="term" value="P:regulation of heart contraction"/>
    <property type="evidence" value="ECO:0000304"/>
    <property type="project" value="ProtInc"/>
</dbReference>
<dbReference type="GO" id="GO:0006986">
    <property type="term" value="P:response to unfolded protein"/>
    <property type="evidence" value="ECO:0000304"/>
    <property type="project" value="ProtInc"/>
</dbReference>
<dbReference type="CDD" id="cd06479">
    <property type="entry name" value="ACD_HspB7_like"/>
    <property type="match status" value="1"/>
</dbReference>
<dbReference type="FunFam" id="2.60.40.790:FF:000020">
    <property type="entry name" value="heat shock protein beta-7 isoform X1"/>
    <property type="match status" value="1"/>
</dbReference>
<dbReference type="Gene3D" id="2.60.40.790">
    <property type="match status" value="1"/>
</dbReference>
<dbReference type="InterPro" id="IPR002068">
    <property type="entry name" value="A-crystallin/Hsp20_dom"/>
</dbReference>
<dbReference type="InterPro" id="IPR037885">
    <property type="entry name" value="ACD_HspB7"/>
</dbReference>
<dbReference type="InterPro" id="IPR001436">
    <property type="entry name" value="Alpha-crystallin/sHSP_animal"/>
</dbReference>
<dbReference type="InterPro" id="IPR008978">
    <property type="entry name" value="HSP20-like_chaperone"/>
</dbReference>
<dbReference type="PANTHER" id="PTHR46907:SF2">
    <property type="entry name" value="HEAT SHOCK PROTEIN BETA-7"/>
    <property type="match status" value="1"/>
</dbReference>
<dbReference type="PANTHER" id="PTHR46907">
    <property type="entry name" value="HEAT SHOCK PROTEIN BETA-7-RELATED"/>
    <property type="match status" value="1"/>
</dbReference>
<dbReference type="Pfam" id="PF00011">
    <property type="entry name" value="HSP20"/>
    <property type="match status" value="1"/>
</dbReference>
<dbReference type="PRINTS" id="PR00299">
    <property type="entry name" value="ACRYSTALLIN"/>
</dbReference>
<dbReference type="SUPFAM" id="SSF49764">
    <property type="entry name" value="HSP20-like chaperones"/>
    <property type="match status" value="1"/>
</dbReference>
<dbReference type="PROSITE" id="PS01031">
    <property type="entry name" value="SHSP"/>
    <property type="match status" value="1"/>
</dbReference>
<feature type="chain" id="PRO_0000125941" description="Heat shock protein beta-7">
    <location>
        <begin position="1"/>
        <end position="170"/>
    </location>
</feature>
<feature type="domain" description="sHSP" evidence="1">
    <location>
        <begin position="62"/>
        <end position="170"/>
    </location>
</feature>
<feature type="region of interest" description="Required for localization to SC35 splicing speckles">
    <location>
        <begin position="1"/>
        <end position="71"/>
    </location>
</feature>
<feature type="region of interest" description="Disordered" evidence="2">
    <location>
        <begin position="1"/>
        <end position="39"/>
    </location>
</feature>
<feature type="compositionally biased region" description="Low complexity" evidence="2">
    <location>
        <begin position="16"/>
        <end position="31"/>
    </location>
</feature>
<feature type="splice variant" id="VSP_002424" description="In isoform 2." evidence="4 5">
    <original>A</original>
    <variation>AAHPTA</variation>
    <location>
        <position position="67"/>
    </location>
</feature>
<feature type="splice variant" id="VSP_002425" description="In isoform 3." evidence="4">
    <original>R</original>
    <variation>K</variation>
    <location>
        <position position="68"/>
    </location>
</feature>
<feature type="splice variant" id="VSP_002426" description="In isoform 3." evidence="4">
    <location>
        <begin position="69"/>
        <end position="170"/>
    </location>
</feature>
<reference key="1">
    <citation type="journal article" date="1999" name="J. Biol. Chem.">
        <title>Identification and characterization of cvHsp. A novel human small stress protein selectively expressed in cardiovascular and insulin-sensitive tissues.</title>
        <authorList>
            <person name="Krief S."/>
            <person name="Faivre J.-F."/>
            <person name="Robert P."/>
            <person name="Le Douarin B."/>
            <person name="Brument-Larignon N."/>
            <person name="Lefrere I."/>
            <person name="Bouzyk M.M."/>
            <person name="Anderson K.M."/>
            <person name="Greller L.D."/>
            <person name="Tobin F.L."/>
            <person name="Souchet M."/>
            <person name="Bril A."/>
        </authorList>
    </citation>
    <scope>NUCLEOTIDE SEQUENCE [MRNA] (ISOFORMS 1; 2 AND 3)</scope>
    <source>
        <tissue>Heart</tissue>
    </source>
</reference>
<reference key="2">
    <citation type="journal article" date="2004" name="Nat. Genet.">
        <title>Complete sequencing and characterization of 21,243 full-length human cDNAs.</title>
        <authorList>
            <person name="Ota T."/>
            <person name="Suzuki Y."/>
            <person name="Nishikawa T."/>
            <person name="Otsuki T."/>
            <person name="Sugiyama T."/>
            <person name="Irie R."/>
            <person name="Wakamatsu A."/>
            <person name="Hayashi K."/>
            <person name="Sato H."/>
            <person name="Nagai K."/>
            <person name="Kimura K."/>
            <person name="Makita H."/>
            <person name="Sekine M."/>
            <person name="Obayashi M."/>
            <person name="Nishi T."/>
            <person name="Shibahara T."/>
            <person name="Tanaka T."/>
            <person name="Ishii S."/>
            <person name="Yamamoto J."/>
            <person name="Saito K."/>
            <person name="Kawai Y."/>
            <person name="Isono Y."/>
            <person name="Nakamura Y."/>
            <person name="Nagahari K."/>
            <person name="Murakami K."/>
            <person name="Yasuda T."/>
            <person name="Iwayanagi T."/>
            <person name="Wagatsuma M."/>
            <person name="Shiratori A."/>
            <person name="Sudo H."/>
            <person name="Hosoiri T."/>
            <person name="Kaku Y."/>
            <person name="Kodaira H."/>
            <person name="Kondo H."/>
            <person name="Sugawara M."/>
            <person name="Takahashi M."/>
            <person name="Kanda K."/>
            <person name="Yokoi T."/>
            <person name="Furuya T."/>
            <person name="Kikkawa E."/>
            <person name="Omura Y."/>
            <person name="Abe K."/>
            <person name="Kamihara K."/>
            <person name="Katsuta N."/>
            <person name="Sato K."/>
            <person name="Tanikawa M."/>
            <person name="Yamazaki M."/>
            <person name="Ninomiya K."/>
            <person name="Ishibashi T."/>
            <person name="Yamashita H."/>
            <person name="Murakawa K."/>
            <person name="Fujimori K."/>
            <person name="Tanai H."/>
            <person name="Kimata M."/>
            <person name="Watanabe M."/>
            <person name="Hiraoka S."/>
            <person name="Chiba Y."/>
            <person name="Ishida S."/>
            <person name="Ono Y."/>
            <person name="Takiguchi S."/>
            <person name="Watanabe S."/>
            <person name="Yosida M."/>
            <person name="Hotuta T."/>
            <person name="Kusano J."/>
            <person name="Kanehori K."/>
            <person name="Takahashi-Fujii A."/>
            <person name="Hara H."/>
            <person name="Tanase T.-O."/>
            <person name="Nomura Y."/>
            <person name="Togiya S."/>
            <person name="Komai F."/>
            <person name="Hara R."/>
            <person name="Takeuchi K."/>
            <person name="Arita M."/>
            <person name="Imose N."/>
            <person name="Musashino K."/>
            <person name="Yuuki H."/>
            <person name="Oshima A."/>
            <person name="Sasaki N."/>
            <person name="Aotsuka S."/>
            <person name="Yoshikawa Y."/>
            <person name="Matsunawa H."/>
            <person name="Ichihara T."/>
            <person name="Shiohata N."/>
            <person name="Sano S."/>
            <person name="Moriya S."/>
            <person name="Momiyama H."/>
            <person name="Satoh N."/>
            <person name="Takami S."/>
            <person name="Terashima Y."/>
            <person name="Suzuki O."/>
            <person name="Nakagawa S."/>
            <person name="Senoh A."/>
            <person name="Mizoguchi H."/>
            <person name="Goto Y."/>
            <person name="Shimizu F."/>
            <person name="Wakebe H."/>
            <person name="Hishigaki H."/>
            <person name="Watanabe T."/>
            <person name="Sugiyama A."/>
            <person name="Takemoto M."/>
            <person name="Kawakami B."/>
            <person name="Yamazaki M."/>
            <person name="Watanabe K."/>
            <person name="Kumagai A."/>
            <person name="Itakura S."/>
            <person name="Fukuzumi Y."/>
            <person name="Fujimori Y."/>
            <person name="Komiyama M."/>
            <person name="Tashiro H."/>
            <person name="Tanigami A."/>
            <person name="Fujiwara T."/>
            <person name="Ono T."/>
            <person name="Yamada K."/>
            <person name="Fujii Y."/>
            <person name="Ozaki K."/>
            <person name="Hirao M."/>
            <person name="Ohmori Y."/>
            <person name="Kawabata A."/>
            <person name="Hikiji T."/>
            <person name="Kobatake N."/>
            <person name="Inagaki H."/>
            <person name="Ikema Y."/>
            <person name="Okamoto S."/>
            <person name="Okitani R."/>
            <person name="Kawakami T."/>
            <person name="Noguchi S."/>
            <person name="Itoh T."/>
            <person name="Shigeta K."/>
            <person name="Senba T."/>
            <person name="Matsumura K."/>
            <person name="Nakajima Y."/>
            <person name="Mizuno T."/>
            <person name="Morinaga M."/>
            <person name="Sasaki M."/>
            <person name="Togashi T."/>
            <person name="Oyama M."/>
            <person name="Hata H."/>
            <person name="Watanabe M."/>
            <person name="Komatsu T."/>
            <person name="Mizushima-Sugano J."/>
            <person name="Satoh T."/>
            <person name="Shirai Y."/>
            <person name="Takahashi Y."/>
            <person name="Nakagawa K."/>
            <person name="Okumura K."/>
            <person name="Nagase T."/>
            <person name="Nomura N."/>
            <person name="Kikuchi H."/>
            <person name="Masuho Y."/>
            <person name="Yamashita R."/>
            <person name="Nakai K."/>
            <person name="Yada T."/>
            <person name="Nakamura Y."/>
            <person name="Ohara O."/>
            <person name="Isogai T."/>
            <person name="Sugano S."/>
        </authorList>
    </citation>
    <scope>NUCLEOTIDE SEQUENCE [LARGE SCALE MRNA] (ISOFORM 1)</scope>
    <source>
        <tissue>Testis</tissue>
    </source>
</reference>
<reference key="3">
    <citation type="journal article" date="2007" name="BMC Genomics">
        <title>The full-ORF clone resource of the German cDNA consortium.</title>
        <authorList>
            <person name="Bechtel S."/>
            <person name="Rosenfelder H."/>
            <person name="Duda A."/>
            <person name="Schmidt C.P."/>
            <person name="Ernst U."/>
            <person name="Wellenreuther R."/>
            <person name="Mehrle A."/>
            <person name="Schuster C."/>
            <person name="Bahr A."/>
            <person name="Bloecker H."/>
            <person name="Heubner D."/>
            <person name="Hoerlein A."/>
            <person name="Michel G."/>
            <person name="Wedler H."/>
            <person name="Koehrer K."/>
            <person name="Ottenwaelder B."/>
            <person name="Poustka A."/>
            <person name="Wiemann S."/>
            <person name="Schupp I."/>
        </authorList>
    </citation>
    <scope>NUCLEOTIDE SEQUENCE [LARGE SCALE MRNA] (ISOFORM 2)</scope>
    <source>
        <tissue>Salivary gland</tissue>
    </source>
</reference>
<reference key="4">
    <citation type="journal article" date="2006" name="Nature">
        <title>The DNA sequence and biological annotation of human chromosome 1.</title>
        <authorList>
            <person name="Gregory S.G."/>
            <person name="Barlow K.F."/>
            <person name="McLay K.E."/>
            <person name="Kaul R."/>
            <person name="Swarbreck D."/>
            <person name="Dunham A."/>
            <person name="Scott C.E."/>
            <person name="Howe K.L."/>
            <person name="Woodfine K."/>
            <person name="Spencer C.C.A."/>
            <person name="Jones M.C."/>
            <person name="Gillson C."/>
            <person name="Searle S."/>
            <person name="Zhou Y."/>
            <person name="Kokocinski F."/>
            <person name="McDonald L."/>
            <person name="Evans R."/>
            <person name="Phillips K."/>
            <person name="Atkinson A."/>
            <person name="Cooper R."/>
            <person name="Jones C."/>
            <person name="Hall R.E."/>
            <person name="Andrews T.D."/>
            <person name="Lloyd C."/>
            <person name="Ainscough R."/>
            <person name="Almeida J.P."/>
            <person name="Ambrose K.D."/>
            <person name="Anderson F."/>
            <person name="Andrew R.W."/>
            <person name="Ashwell R.I.S."/>
            <person name="Aubin K."/>
            <person name="Babbage A.K."/>
            <person name="Bagguley C.L."/>
            <person name="Bailey J."/>
            <person name="Beasley H."/>
            <person name="Bethel G."/>
            <person name="Bird C.P."/>
            <person name="Bray-Allen S."/>
            <person name="Brown J.Y."/>
            <person name="Brown A.J."/>
            <person name="Buckley D."/>
            <person name="Burton J."/>
            <person name="Bye J."/>
            <person name="Carder C."/>
            <person name="Chapman J.C."/>
            <person name="Clark S.Y."/>
            <person name="Clarke G."/>
            <person name="Clee C."/>
            <person name="Cobley V."/>
            <person name="Collier R.E."/>
            <person name="Corby N."/>
            <person name="Coville G.J."/>
            <person name="Davies J."/>
            <person name="Deadman R."/>
            <person name="Dunn M."/>
            <person name="Earthrowl M."/>
            <person name="Ellington A.G."/>
            <person name="Errington H."/>
            <person name="Frankish A."/>
            <person name="Frankland J."/>
            <person name="French L."/>
            <person name="Garner P."/>
            <person name="Garnett J."/>
            <person name="Gay L."/>
            <person name="Ghori M.R.J."/>
            <person name="Gibson R."/>
            <person name="Gilby L.M."/>
            <person name="Gillett W."/>
            <person name="Glithero R.J."/>
            <person name="Grafham D.V."/>
            <person name="Griffiths C."/>
            <person name="Griffiths-Jones S."/>
            <person name="Grocock R."/>
            <person name="Hammond S."/>
            <person name="Harrison E.S.I."/>
            <person name="Hart E."/>
            <person name="Haugen E."/>
            <person name="Heath P.D."/>
            <person name="Holmes S."/>
            <person name="Holt K."/>
            <person name="Howden P.J."/>
            <person name="Hunt A.R."/>
            <person name="Hunt S.E."/>
            <person name="Hunter G."/>
            <person name="Isherwood J."/>
            <person name="James R."/>
            <person name="Johnson C."/>
            <person name="Johnson D."/>
            <person name="Joy A."/>
            <person name="Kay M."/>
            <person name="Kershaw J.K."/>
            <person name="Kibukawa M."/>
            <person name="Kimberley A.M."/>
            <person name="King A."/>
            <person name="Knights A.J."/>
            <person name="Lad H."/>
            <person name="Laird G."/>
            <person name="Lawlor S."/>
            <person name="Leongamornlert D.A."/>
            <person name="Lloyd D.M."/>
            <person name="Loveland J."/>
            <person name="Lovell J."/>
            <person name="Lush M.J."/>
            <person name="Lyne R."/>
            <person name="Martin S."/>
            <person name="Mashreghi-Mohammadi M."/>
            <person name="Matthews L."/>
            <person name="Matthews N.S.W."/>
            <person name="McLaren S."/>
            <person name="Milne S."/>
            <person name="Mistry S."/>
            <person name="Moore M.J.F."/>
            <person name="Nickerson T."/>
            <person name="O'Dell C.N."/>
            <person name="Oliver K."/>
            <person name="Palmeiri A."/>
            <person name="Palmer S.A."/>
            <person name="Parker A."/>
            <person name="Patel D."/>
            <person name="Pearce A.V."/>
            <person name="Peck A.I."/>
            <person name="Pelan S."/>
            <person name="Phelps K."/>
            <person name="Phillimore B.J."/>
            <person name="Plumb R."/>
            <person name="Rajan J."/>
            <person name="Raymond C."/>
            <person name="Rouse G."/>
            <person name="Saenphimmachak C."/>
            <person name="Sehra H.K."/>
            <person name="Sheridan E."/>
            <person name="Shownkeen R."/>
            <person name="Sims S."/>
            <person name="Skuce C.D."/>
            <person name="Smith M."/>
            <person name="Steward C."/>
            <person name="Subramanian S."/>
            <person name="Sycamore N."/>
            <person name="Tracey A."/>
            <person name="Tromans A."/>
            <person name="Van Helmond Z."/>
            <person name="Wall M."/>
            <person name="Wallis J.M."/>
            <person name="White S."/>
            <person name="Whitehead S.L."/>
            <person name="Wilkinson J.E."/>
            <person name="Willey D.L."/>
            <person name="Williams H."/>
            <person name="Wilming L."/>
            <person name="Wray P.W."/>
            <person name="Wu Z."/>
            <person name="Coulson A."/>
            <person name="Vaudin M."/>
            <person name="Sulston J.E."/>
            <person name="Durbin R.M."/>
            <person name="Hubbard T."/>
            <person name="Wooster R."/>
            <person name="Dunham I."/>
            <person name="Carter N.P."/>
            <person name="McVean G."/>
            <person name="Ross M.T."/>
            <person name="Harrow J."/>
            <person name="Olson M.V."/>
            <person name="Beck S."/>
            <person name="Rogers J."/>
            <person name="Bentley D.R."/>
        </authorList>
    </citation>
    <scope>NUCLEOTIDE SEQUENCE [LARGE SCALE GENOMIC DNA]</scope>
</reference>
<reference key="5">
    <citation type="journal article" date="2004" name="Genome Res.">
        <title>The status, quality, and expansion of the NIH full-length cDNA project: the Mammalian Gene Collection (MGC).</title>
        <authorList>
            <consortium name="The MGC Project Team"/>
        </authorList>
    </citation>
    <scope>NUCLEOTIDE SEQUENCE [LARGE SCALE MRNA] (ISOFORM 1)</scope>
    <source>
        <tissue>Muscle</tissue>
    </source>
</reference>
<reference key="6">
    <citation type="journal article" date="2009" name="Biochim. Biophys. Acta">
        <title>HSPB7 is a SC35 speckle resident small heat shock protein.</title>
        <authorList>
            <person name="Vos M.J."/>
            <person name="Kanon B."/>
            <person name="Kampinga H.H."/>
        </authorList>
    </citation>
    <scope>SUBCELLULAR LOCATION</scope>
</reference>
<sequence length="170" mass="18611">MSHRTSSTFRAERSFHSSSSSSSSSTSSSASRALPAQDPPMEKALSMFSDDFGSFMRPHSEPLAFPARPGGAGNIKTLGDAYEFAVDVRDFSPEDIIVTTSNNHIEVRAEKLAADGTVMNTFAHKCQLPEDVDPTSVTSALREDGSLTIRARRHPHTEHVQQTFRTEIKI</sequence>
<protein>
    <recommendedName>
        <fullName>Heat shock protein beta-7</fullName>
        <shortName>HspB7</shortName>
    </recommendedName>
    <alternativeName>
        <fullName>Cardiovascular heat shock protein</fullName>
        <shortName>cvHsp</shortName>
    </alternativeName>
</protein>